<comment type="function">
    <text>A non-essential protein that preferentially binds curved DNA. Binds non-curved DNA with a much lower affinity.</text>
</comment>
<comment type="subcellular location">
    <subcellularLocation>
        <location>Nucleus</location>
    </subcellularLocation>
</comment>
<comment type="similarity">
    <text evidence="3">Belongs to the peptidase M24 family.</text>
</comment>
<proteinExistence type="evidence at protein level"/>
<feature type="chain" id="PRO_0000148991" description="Curved DNA-binding protein">
    <location>
        <begin position="1"/>
        <end position="381"/>
    </location>
</feature>
<feature type="short sequence motif" description="Nuclear localization signal" evidence="1">
    <location>
        <begin position="368"/>
        <end position="375"/>
    </location>
</feature>
<feature type="modified residue" description="Phosphoserine" evidence="2">
    <location>
        <position position="8"/>
    </location>
</feature>
<feature type="modified residue" description="Phosphothreonine" evidence="2">
    <location>
        <position position="362"/>
    </location>
</feature>
<sequence length="381" mass="41598">MSTKEATSETAVDYSLSNPETVNKYKIAGEVSQNVIKKVVELCQPGAKIYDICVRGDELLNEAIKKVYRTKDAYKGIAFPTAVSPNDMAAHLSPLKSDPEANLALKSGDVVKILLGAHIDGFASLVATTTVVSEEPVTGPAADVIAAASAALKAAQRTIKPGNTNWQVTDIVDKIATSYGCKPVAGMLSHQQEREVIDGKKQVILNPSDSQRSEMDTFTFEEGEVYGVDILVSTSPSGKVKRSDIATRIYKKTDTTYMLKLQASRKVYSEIQTKFGPFPFSTRNISFDSRTNMGLNECTSHKLLFPYEVLLDKDGGIVAEFYSTIALTKKGTIILSDSEPKEDFIKSDKKVEDPEIVALLETPIKVTKNKKKSKKPSKANE</sequence>
<accession>Q09184</accession>
<evidence type="ECO:0000255" key="1"/>
<evidence type="ECO:0000269" key="2">
    <source>
    </source>
</evidence>
<evidence type="ECO:0000305" key="3"/>
<protein>
    <recommendedName>
        <fullName>Curved DNA-binding protein</fullName>
    </recommendedName>
    <alternativeName>
        <fullName>42 kDa protein</fullName>
    </alternativeName>
</protein>
<dbReference type="EMBL" id="D14907">
    <property type="protein sequence ID" value="BAA03607.1"/>
    <property type="molecule type" value="Genomic_DNA"/>
</dbReference>
<dbReference type="EMBL" id="CU329670">
    <property type="protein sequence ID" value="CAB11663.1"/>
    <property type="molecule type" value="Genomic_DNA"/>
</dbReference>
<dbReference type="PIR" id="S46583">
    <property type="entry name" value="S46583"/>
</dbReference>
<dbReference type="RefSeq" id="NP_593397.1">
    <property type="nucleotide sequence ID" value="NM_001018829.2"/>
</dbReference>
<dbReference type="SMR" id="Q09184"/>
<dbReference type="BioGRID" id="278308">
    <property type="interactions" value="6"/>
</dbReference>
<dbReference type="FunCoup" id="Q09184">
    <property type="interactions" value="977"/>
</dbReference>
<dbReference type="STRING" id="284812.Q09184"/>
<dbReference type="iPTMnet" id="Q09184"/>
<dbReference type="PaxDb" id="4896-SPAC23H4.09.1"/>
<dbReference type="EnsemblFungi" id="SPAC23H4.09.1">
    <property type="protein sequence ID" value="SPAC23H4.09.1:pep"/>
    <property type="gene ID" value="SPAC23H4.09"/>
</dbReference>
<dbReference type="GeneID" id="2541817"/>
<dbReference type="KEGG" id="spo:2541817"/>
<dbReference type="PomBase" id="SPAC23H4.09">
    <property type="gene designation" value="cdb4"/>
</dbReference>
<dbReference type="VEuPathDB" id="FungiDB:SPAC23H4.09"/>
<dbReference type="eggNOG" id="KOG2776">
    <property type="taxonomic scope" value="Eukaryota"/>
</dbReference>
<dbReference type="HOGENOM" id="CLU_041451_2_1_1"/>
<dbReference type="InParanoid" id="Q09184"/>
<dbReference type="OMA" id="SRMFYSE"/>
<dbReference type="PhylomeDB" id="Q09184"/>
<dbReference type="Reactome" id="R-SPO-6798695">
    <property type="pathway name" value="Neutrophil degranulation"/>
</dbReference>
<dbReference type="PRO" id="PR:Q09184"/>
<dbReference type="Proteomes" id="UP000002485">
    <property type="component" value="Chromosome I"/>
</dbReference>
<dbReference type="GO" id="GO:0005829">
    <property type="term" value="C:cytosol"/>
    <property type="evidence" value="ECO:0007005"/>
    <property type="project" value="PomBase"/>
</dbReference>
<dbReference type="GO" id="GO:0005634">
    <property type="term" value="C:nucleus"/>
    <property type="evidence" value="ECO:0000314"/>
    <property type="project" value="PomBase"/>
</dbReference>
<dbReference type="GO" id="GO:0003677">
    <property type="term" value="F:DNA binding"/>
    <property type="evidence" value="ECO:0007669"/>
    <property type="project" value="UniProtKB-KW"/>
</dbReference>
<dbReference type="GO" id="GO:0004518">
    <property type="term" value="F:nuclease activity"/>
    <property type="evidence" value="ECO:0000304"/>
    <property type="project" value="PomBase"/>
</dbReference>
<dbReference type="CDD" id="cd01089">
    <property type="entry name" value="PA2G4-like"/>
    <property type="match status" value="1"/>
</dbReference>
<dbReference type="FunFam" id="1.10.10.10:FF:000029">
    <property type="entry name" value="Proliferation-associated 2G4, a"/>
    <property type="match status" value="1"/>
</dbReference>
<dbReference type="Gene3D" id="3.90.230.10">
    <property type="entry name" value="Creatinase/methionine aminopeptidase superfamily"/>
    <property type="match status" value="1"/>
</dbReference>
<dbReference type="Gene3D" id="1.10.10.10">
    <property type="entry name" value="Winged helix-like DNA-binding domain superfamily/Winged helix DNA-binding domain"/>
    <property type="match status" value="1"/>
</dbReference>
<dbReference type="InterPro" id="IPR036005">
    <property type="entry name" value="Creatinase/aminopeptidase-like"/>
</dbReference>
<dbReference type="InterPro" id="IPR004545">
    <property type="entry name" value="PA2G4"/>
</dbReference>
<dbReference type="InterPro" id="IPR047113">
    <property type="entry name" value="PA2G4/ARX1"/>
</dbReference>
<dbReference type="InterPro" id="IPR000994">
    <property type="entry name" value="Pept_M24"/>
</dbReference>
<dbReference type="InterPro" id="IPR036388">
    <property type="entry name" value="WH-like_DNA-bd_sf"/>
</dbReference>
<dbReference type="InterPro" id="IPR036390">
    <property type="entry name" value="WH_DNA-bd_sf"/>
</dbReference>
<dbReference type="NCBIfam" id="TIGR00495">
    <property type="entry name" value="crvDNA_42K"/>
    <property type="match status" value="1"/>
</dbReference>
<dbReference type="PANTHER" id="PTHR10804:SF11">
    <property type="entry name" value="PROLIFERATION-ASSOCIATED PROTEIN 2G4"/>
    <property type="match status" value="1"/>
</dbReference>
<dbReference type="PANTHER" id="PTHR10804">
    <property type="entry name" value="PROTEASE FAMILY M24 METHIONYL AMINOPEPTIDASE, AMINOPEPTIDASE P"/>
    <property type="match status" value="1"/>
</dbReference>
<dbReference type="Pfam" id="PF00557">
    <property type="entry name" value="Peptidase_M24"/>
    <property type="match status" value="1"/>
</dbReference>
<dbReference type="SUPFAM" id="SSF55920">
    <property type="entry name" value="Creatinase/aminopeptidase"/>
    <property type="match status" value="1"/>
</dbReference>
<dbReference type="SUPFAM" id="SSF46785">
    <property type="entry name" value="Winged helix' DNA-binding domain"/>
    <property type="match status" value="1"/>
</dbReference>
<organism>
    <name type="scientific">Schizosaccharomyces pombe (strain 972 / ATCC 24843)</name>
    <name type="common">Fission yeast</name>
    <dbReference type="NCBI Taxonomy" id="284812"/>
    <lineage>
        <taxon>Eukaryota</taxon>
        <taxon>Fungi</taxon>
        <taxon>Dikarya</taxon>
        <taxon>Ascomycota</taxon>
        <taxon>Taphrinomycotina</taxon>
        <taxon>Schizosaccharomycetes</taxon>
        <taxon>Schizosaccharomycetales</taxon>
        <taxon>Schizosaccharomycetaceae</taxon>
        <taxon>Schizosaccharomyces</taxon>
    </lineage>
</organism>
<gene>
    <name type="primary">cdb4</name>
    <name type="ORF">SPAC23H4.09</name>
</gene>
<keyword id="KW-0903">Direct protein sequencing</keyword>
<keyword id="KW-0238">DNA-binding</keyword>
<keyword id="KW-0539">Nucleus</keyword>
<keyword id="KW-0597">Phosphoprotein</keyword>
<keyword id="KW-1185">Reference proteome</keyword>
<name>CDB4_SCHPO</name>
<reference key="1">
    <citation type="journal article" date="1994" name="Yeast">
        <title>A fission yeast gene encoding a protein that preferentially associates with curved DNA.</title>
        <authorList>
            <person name="Yamada H."/>
            <person name="Mori H."/>
            <person name="Momoi H."/>
            <person name="Nakagawa Y."/>
            <person name="Ueguchi C."/>
            <person name="Mizuno T."/>
        </authorList>
    </citation>
    <scope>NUCLEOTIDE SEQUENCE [GENOMIC DNA]</scope>
    <scope>PROTEIN SEQUENCE OF 5-31</scope>
    <source>
        <strain>972 / ATCC 24843</strain>
    </source>
</reference>
<reference key="2">
    <citation type="journal article" date="2002" name="Nature">
        <title>The genome sequence of Schizosaccharomyces pombe.</title>
        <authorList>
            <person name="Wood V."/>
            <person name="Gwilliam R."/>
            <person name="Rajandream M.A."/>
            <person name="Lyne M.H."/>
            <person name="Lyne R."/>
            <person name="Stewart A."/>
            <person name="Sgouros J.G."/>
            <person name="Peat N."/>
            <person name="Hayles J."/>
            <person name="Baker S.G."/>
            <person name="Basham D."/>
            <person name="Bowman S."/>
            <person name="Brooks K."/>
            <person name="Brown D."/>
            <person name="Brown S."/>
            <person name="Chillingworth T."/>
            <person name="Churcher C.M."/>
            <person name="Collins M."/>
            <person name="Connor R."/>
            <person name="Cronin A."/>
            <person name="Davis P."/>
            <person name="Feltwell T."/>
            <person name="Fraser A."/>
            <person name="Gentles S."/>
            <person name="Goble A."/>
            <person name="Hamlin N."/>
            <person name="Harris D.E."/>
            <person name="Hidalgo J."/>
            <person name="Hodgson G."/>
            <person name="Holroyd S."/>
            <person name="Hornsby T."/>
            <person name="Howarth S."/>
            <person name="Huckle E.J."/>
            <person name="Hunt S."/>
            <person name="Jagels K."/>
            <person name="James K.D."/>
            <person name="Jones L."/>
            <person name="Jones M."/>
            <person name="Leather S."/>
            <person name="McDonald S."/>
            <person name="McLean J."/>
            <person name="Mooney P."/>
            <person name="Moule S."/>
            <person name="Mungall K.L."/>
            <person name="Murphy L.D."/>
            <person name="Niblett D."/>
            <person name="Odell C."/>
            <person name="Oliver K."/>
            <person name="O'Neil S."/>
            <person name="Pearson D."/>
            <person name="Quail M.A."/>
            <person name="Rabbinowitsch E."/>
            <person name="Rutherford K.M."/>
            <person name="Rutter S."/>
            <person name="Saunders D."/>
            <person name="Seeger K."/>
            <person name="Sharp S."/>
            <person name="Skelton J."/>
            <person name="Simmonds M.N."/>
            <person name="Squares R."/>
            <person name="Squares S."/>
            <person name="Stevens K."/>
            <person name="Taylor K."/>
            <person name="Taylor R.G."/>
            <person name="Tivey A."/>
            <person name="Walsh S.V."/>
            <person name="Warren T."/>
            <person name="Whitehead S."/>
            <person name="Woodward J.R."/>
            <person name="Volckaert G."/>
            <person name="Aert R."/>
            <person name="Robben J."/>
            <person name="Grymonprez B."/>
            <person name="Weltjens I."/>
            <person name="Vanstreels E."/>
            <person name="Rieger M."/>
            <person name="Schaefer M."/>
            <person name="Mueller-Auer S."/>
            <person name="Gabel C."/>
            <person name="Fuchs M."/>
            <person name="Duesterhoeft A."/>
            <person name="Fritzc C."/>
            <person name="Holzer E."/>
            <person name="Moestl D."/>
            <person name="Hilbert H."/>
            <person name="Borzym K."/>
            <person name="Langer I."/>
            <person name="Beck A."/>
            <person name="Lehrach H."/>
            <person name="Reinhardt R."/>
            <person name="Pohl T.M."/>
            <person name="Eger P."/>
            <person name="Zimmermann W."/>
            <person name="Wedler H."/>
            <person name="Wambutt R."/>
            <person name="Purnelle B."/>
            <person name="Goffeau A."/>
            <person name="Cadieu E."/>
            <person name="Dreano S."/>
            <person name="Gloux S."/>
            <person name="Lelaure V."/>
            <person name="Mottier S."/>
            <person name="Galibert F."/>
            <person name="Aves S.J."/>
            <person name="Xiang Z."/>
            <person name="Hunt C."/>
            <person name="Moore K."/>
            <person name="Hurst S.M."/>
            <person name="Lucas M."/>
            <person name="Rochet M."/>
            <person name="Gaillardin C."/>
            <person name="Tallada V.A."/>
            <person name="Garzon A."/>
            <person name="Thode G."/>
            <person name="Daga R.R."/>
            <person name="Cruzado L."/>
            <person name="Jimenez J."/>
            <person name="Sanchez M."/>
            <person name="del Rey F."/>
            <person name="Benito J."/>
            <person name="Dominguez A."/>
            <person name="Revuelta J.L."/>
            <person name="Moreno S."/>
            <person name="Armstrong J."/>
            <person name="Forsburg S.L."/>
            <person name="Cerutti L."/>
            <person name="Lowe T."/>
            <person name="McCombie W.R."/>
            <person name="Paulsen I."/>
            <person name="Potashkin J."/>
            <person name="Shpakovski G.V."/>
            <person name="Ussery D."/>
            <person name="Barrell B.G."/>
            <person name="Nurse P."/>
        </authorList>
    </citation>
    <scope>NUCLEOTIDE SEQUENCE [LARGE SCALE GENOMIC DNA]</scope>
    <source>
        <strain>972 / ATCC 24843</strain>
    </source>
</reference>
<reference key="3">
    <citation type="journal article" date="2008" name="J. Proteome Res.">
        <title>Phosphoproteome analysis of fission yeast.</title>
        <authorList>
            <person name="Wilson-Grady J.T."/>
            <person name="Villen J."/>
            <person name="Gygi S.P."/>
        </authorList>
    </citation>
    <scope>PHOSPHORYLATION [LARGE SCALE ANALYSIS] AT SER-8 AND THR-362</scope>
    <scope>IDENTIFICATION BY MASS SPECTROMETRY</scope>
</reference>